<evidence type="ECO:0000250" key="1"/>
<evidence type="ECO:0000255" key="2">
    <source>
        <dbReference type="PROSITE-ProRule" id="PRU01083"/>
    </source>
</evidence>
<evidence type="ECO:0000305" key="3"/>
<name>RIBD_AQUAE</name>
<organism>
    <name type="scientific">Aquifex aeolicus (strain VF5)</name>
    <dbReference type="NCBI Taxonomy" id="224324"/>
    <lineage>
        <taxon>Bacteria</taxon>
        <taxon>Pseudomonadati</taxon>
        <taxon>Aquificota</taxon>
        <taxon>Aquificia</taxon>
        <taxon>Aquificales</taxon>
        <taxon>Aquificaceae</taxon>
        <taxon>Aquifex</taxon>
    </lineage>
</organism>
<keyword id="KW-0378">Hydrolase</keyword>
<keyword id="KW-0479">Metal-binding</keyword>
<keyword id="KW-0511">Multifunctional enzyme</keyword>
<keyword id="KW-0521">NADP</keyword>
<keyword id="KW-0560">Oxidoreductase</keyword>
<keyword id="KW-1185">Reference proteome</keyword>
<keyword id="KW-0686">Riboflavin biosynthesis</keyword>
<keyword id="KW-0862">Zinc</keyword>
<protein>
    <recommendedName>
        <fullName>Riboflavin biosynthesis protein RibD</fullName>
    </recommendedName>
    <domain>
        <recommendedName>
            <fullName>Diaminohydroxyphosphoribosylaminopyrimidine deaminase</fullName>
            <shortName>DRAP deaminase</shortName>
            <ecNumber>3.5.4.26</ecNumber>
        </recommendedName>
        <alternativeName>
            <fullName>Riboflavin-specific deaminase</fullName>
        </alternativeName>
    </domain>
    <domain>
        <recommendedName>
            <fullName>5-amino-6-(5-phosphoribosylamino)uracil reductase</fullName>
            <ecNumber>1.1.1.193</ecNumber>
        </recommendedName>
        <alternativeName>
            <fullName>HTP reductase</fullName>
        </alternativeName>
    </domain>
</protein>
<feature type="chain" id="PRO_0000171713" description="Riboflavin biosynthesis protein RibD">
    <location>
        <begin position="1"/>
        <end position="356"/>
    </location>
</feature>
<feature type="domain" description="CMP/dCMP-type deaminase" evidence="2">
    <location>
        <begin position="4"/>
        <end position="126"/>
    </location>
</feature>
<feature type="region of interest" description="Deaminase">
    <location>
        <begin position="1"/>
        <end position="148"/>
    </location>
</feature>
<feature type="region of interest" description="Reductase">
    <location>
        <begin position="149"/>
        <end position="356"/>
    </location>
</feature>
<feature type="active site" description="Proton donor" evidence="1">
    <location>
        <position position="55"/>
    </location>
</feature>
<feature type="binding site" evidence="1">
    <location>
        <position position="53"/>
    </location>
    <ligand>
        <name>Zn(2+)</name>
        <dbReference type="ChEBI" id="CHEBI:29105"/>
        <note>catalytic</note>
    </ligand>
</feature>
<feature type="binding site" evidence="1">
    <location>
        <position position="78"/>
    </location>
    <ligand>
        <name>Zn(2+)</name>
        <dbReference type="ChEBI" id="CHEBI:29105"/>
        <note>catalytic</note>
    </ligand>
</feature>
<feature type="binding site" evidence="1">
    <location>
        <position position="87"/>
    </location>
    <ligand>
        <name>Zn(2+)</name>
        <dbReference type="ChEBI" id="CHEBI:29105"/>
        <note>catalytic</note>
    </ligand>
</feature>
<feature type="binding site" evidence="1">
    <location>
        <position position="157"/>
    </location>
    <ligand>
        <name>NADP(+)</name>
        <dbReference type="ChEBI" id="CHEBI:58349"/>
    </ligand>
</feature>
<feature type="binding site" evidence="1">
    <location>
        <position position="171"/>
    </location>
    <ligand>
        <name>substrate</name>
    </ligand>
</feature>
<feature type="binding site" evidence="1">
    <location>
        <position position="173"/>
    </location>
    <ligand>
        <name>NADP(+)</name>
        <dbReference type="ChEBI" id="CHEBI:58349"/>
    </ligand>
</feature>
<feature type="binding site" evidence="1">
    <location>
        <position position="187"/>
    </location>
    <ligand>
        <name>substrate</name>
    </ligand>
</feature>
<feature type="binding site" evidence="1">
    <location>
        <position position="199"/>
    </location>
    <ligand>
        <name>NADP(+)</name>
        <dbReference type="ChEBI" id="CHEBI:58349"/>
    </ligand>
</feature>
<feature type="binding site" evidence="1">
    <location>
        <position position="203"/>
    </location>
    <ligand>
        <name>NADP(+)</name>
        <dbReference type="ChEBI" id="CHEBI:58349"/>
    </ligand>
</feature>
<feature type="binding site" evidence="1">
    <location>
        <position position="207"/>
    </location>
    <ligand>
        <name>substrate</name>
    </ligand>
</feature>
<feature type="binding site" evidence="1">
    <location>
        <position position="210"/>
    </location>
    <ligand>
        <name>substrate</name>
    </ligand>
</feature>
<feature type="binding site" evidence="1">
    <location>
        <position position="290"/>
    </location>
    <ligand>
        <name>substrate</name>
    </ligand>
</feature>
<feature type="binding site" evidence="1">
    <location>
        <begin position="292"/>
        <end position="298"/>
    </location>
    <ligand>
        <name>NADP(+)</name>
        <dbReference type="ChEBI" id="CHEBI:58349"/>
    </ligand>
</feature>
<dbReference type="EC" id="3.5.4.26"/>
<dbReference type="EC" id="1.1.1.193"/>
<dbReference type="EMBL" id="AE000657">
    <property type="protein sequence ID" value="AAC06487.1"/>
    <property type="molecule type" value="Genomic_DNA"/>
</dbReference>
<dbReference type="PIR" id="C70313">
    <property type="entry name" value="C70313"/>
</dbReference>
<dbReference type="RefSeq" id="NP_213094.1">
    <property type="nucleotide sequence ID" value="NC_000918.1"/>
</dbReference>
<dbReference type="RefSeq" id="WP_010880032.1">
    <property type="nucleotide sequence ID" value="NC_000918.1"/>
</dbReference>
<dbReference type="SMR" id="O66534"/>
<dbReference type="FunCoup" id="O66534">
    <property type="interactions" value="427"/>
</dbReference>
<dbReference type="STRING" id="224324.aq_138"/>
<dbReference type="EnsemblBacteria" id="AAC06487">
    <property type="protein sequence ID" value="AAC06487"/>
    <property type="gene ID" value="aq_138"/>
</dbReference>
<dbReference type="KEGG" id="aae:aq_138"/>
<dbReference type="PATRIC" id="fig|224324.8.peg.117"/>
<dbReference type="eggNOG" id="COG0117">
    <property type="taxonomic scope" value="Bacteria"/>
</dbReference>
<dbReference type="eggNOG" id="COG1985">
    <property type="taxonomic scope" value="Bacteria"/>
</dbReference>
<dbReference type="HOGENOM" id="CLU_036590_1_2_0"/>
<dbReference type="InParanoid" id="O66534"/>
<dbReference type="OrthoDB" id="9800865at2"/>
<dbReference type="UniPathway" id="UPA00275">
    <property type="reaction ID" value="UER00401"/>
</dbReference>
<dbReference type="UniPathway" id="UPA00275">
    <property type="reaction ID" value="UER00402"/>
</dbReference>
<dbReference type="Proteomes" id="UP000000798">
    <property type="component" value="Chromosome"/>
</dbReference>
<dbReference type="GO" id="GO:0008703">
    <property type="term" value="F:5-amino-6-(5-phosphoribosylamino)uracil reductase activity"/>
    <property type="evidence" value="ECO:0007669"/>
    <property type="project" value="UniProtKB-EC"/>
</dbReference>
<dbReference type="GO" id="GO:0008835">
    <property type="term" value="F:diaminohydroxyphosphoribosylaminopyrimidine deaminase activity"/>
    <property type="evidence" value="ECO:0000318"/>
    <property type="project" value="GO_Central"/>
</dbReference>
<dbReference type="GO" id="GO:0050661">
    <property type="term" value="F:NADP binding"/>
    <property type="evidence" value="ECO:0007669"/>
    <property type="project" value="InterPro"/>
</dbReference>
<dbReference type="GO" id="GO:0008270">
    <property type="term" value="F:zinc ion binding"/>
    <property type="evidence" value="ECO:0007669"/>
    <property type="project" value="InterPro"/>
</dbReference>
<dbReference type="GO" id="GO:0009231">
    <property type="term" value="P:riboflavin biosynthetic process"/>
    <property type="evidence" value="ECO:0007669"/>
    <property type="project" value="UniProtKB-UniPathway"/>
</dbReference>
<dbReference type="CDD" id="cd01284">
    <property type="entry name" value="Riboflavin_deaminase-reductase"/>
    <property type="match status" value="1"/>
</dbReference>
<dbReference type="FunFam" id="3.40.140.10:FF:000025">
    <property type="entry name" value="Riboflavin biosynthesis protein RibD"/>
    <property type="match status" value="1"/>
</dbReference>
<dbReference type="Gene3D" id="3.40.140.10">
    <property type="entry name" value="Cytidine Deaminase, domain 2"/>
    <property type="match status" value="1"/>
</dbReference>
<dbReference type="Gene3D" id="3.40.430.10">
    <property type="entry name" value="Dihydrofolate Reductase, subunit A"/>
    <property type="match status" value="1"/>
</dbReference>
<dbReference type="InterPro" id="IPR016192">
    <property type="entry name" value="APOBEC/CMP_deaminase_Zn-bd"/>
</dbReference>
<dbReference type="InterPro" id="IPR002125">
    <property type="entry name" value="CMP_dCMP_dom"/>
</dbReference>
<dbReference type="InterPro" id="IPR016193">
    <property type="entry name" value="Cytidine_deaminase-like"/>
</dbReference>
<dbReference type="InterPro" id="IPR024072">
    <property type="entry name" value="DHFR-like_dom_sf"/>
</dbReference>
<dbReference type="InterPro" id="IPR004794">
    <property type="entry name" value="Eubact_RibD"/>
</dbReference>
<dbReference type="InterPro" id="IPR011549">
    <property type="entry name" value="RibD_C"/>
</dbReference>
<dbReference type="InterPro" id="IPR002734">
    <property type="entry name" value="RibDG_C"/>
</dbReference>
<dbReference type="InterPro" id="IPR050765">
    <property type="entry name" value="Riboflavin_Biosynth_HTPR"/>
</dbReference>
<dbReference type="NCBIfam" id="TIGR00326">
    <property type="entry name" value="eubact_ribD"/>
    <property type="match status" value="1"/>
</dbReference>
<dbReference type="NCBIfam" id="TIGR00227">
    <property type="entry name" value="ribD_Cterm"/>
    <property type="match status" value="1"/>
</dbReference>
<dbReference type="PANTHER" id="PTHR38011:SF7">
    <property type="entry name" value="2,5-DIAMINO-6-RIBOSYLAMINO-4(3H)-PYRIMIDINONE 5'-PHOSPHATE REDUCTASE"/>
    <property type="match status" value="1"/>
</dbReference>
<dbReference type="PANTHER" id="PTHR38011">
    <property type="entry name" value="DIHYDROFOLATE REDUCTASE FAMILY PROTEIN (AFU_ORTHOLOGUE AFUA_8G06820)"/>
    <property type="match status" value="1"/>
</dbReference>
<dbReference type="Pfam" id="PF00383">
    <property type="entry name" value="dCMP_cyt_deam_1"/>
    <property type="match status" value="1"/>
</dbReference>
<dbReference type="Pfam" id="PF01872">
    <property type="entry name" value="RibD_C"/>
    <property type="match status" value="1"/>
</dbReference>
<dbReference type="PIRSF" id="PIRSF006769">
    <property type="entry name" value="RibD"/>
    <property type="match status" value="1"/>
</dbReference>
<dbReference type="SUPFAM" id="SSF53927">
    <property type="entry name" value="Cytidine deaminase-like"/>
    <property type="match status" value="1"/>
</dbReference>
<dbReference type="SUPFAM" id="SSF53597">
    <property type="entry name" value="Dihydrofolate reductase-like"/>
    <property type="match status" value="1"/>
</dbReference>
<dbReference type="PROSITE" id="PS00903">
    <property type="entry name" value="CYT_DCMP_DEAMINASES_1"/>
    <property type="match status" value="1"/>
</dbReference>
<dbReference type="PROSITE" id="PS51747">
    <property type="entry name" value="CYT_DCMP_DEAMINASES_2"/>
    <property type="match status" value="1"/>
</dbReference>
<gene>
    <name type="primary">ribD</name>
    <name type="synonym">ribG</name>
    <name type="ordered locus">aq_138</name>
</gene>
<reference key="1">
    <citation type="journal article" date="1998" name="Nature">
        <title>The complete genome of the hyperthermophilic bacterium Aquifex aeolicus.</title>
        <authorList>
            <person name="Deckert G."/>
            <person name="Warren P.V."/>
            <person name="Gaasterland T."/>
            <person name="Young W.G."/>
            <person name="Lenox A.L."/>
            <person name="Graham D.E."/>
            <person name="Overbeek R."/>
            <person name="Snead M.A."/>
            <person name="Keller M."/>
            <person name="Aujay M."/>
            <person name="Huber R."/>
            <person name="Feldman R.A."/>
            <person name="Short J.M."/>
            <person name="Olsen G.J."/>
            <person name="Swanson R.V."/>
        </authorList>
    </citation>
    <scope>NUCLEOTIDE SEQUENCE [LARGE SCALE GENOMIC DNA]</scope>
    <source>
        <strain>VF5</strain>
    </source>
</reference>
<sequence length="356" mass="39629">MIREIDKNYMKLALSLAKKRKGYTHPNPTVGAVVVKEGKIVGLGYHEKAGKPHAEVMALGQAGEKAKGATLYVTLEPCTHFGRTPPCTDAIIRSGIKRVVVATLDPNPLMSGKGVEKLRNAGIEVDVGVCEEEARELNEDFFTYITQERPYITLKWAQTLDGKLATLTGSSKWITSKESRKVAHILRREATAVLVGVNTVIKDDPHLTVRFVPTEKQPVRIILDPELEVPLSAKVLNTEEAPTIVITKKENEKAEKLKEKGVQVLILKGFNLKNILKKLKELEIMHLMVEGGPRTLTSFLKEGFFDRIVVFIAPKIMGEGLSIGDLGIRSIEESLKVRKKKVENLGEDLVIFFKRY</sequence>
<proteinExistence type="inferred from homology"/>
<accession>O66534</accession>
<comment type="function">
    <text>Converts 2,5-diamino-6-(ribosylamino)-4(3h)-pyrimidinone 5'-phosphate into 5-amino-6-(ribosylamino)-2,4(1h,3h)-pyrimidinedione 5'-phosphate.</text>
</comment>
<comment type="catalytic activity">
    <reaction>
        <text>2,5-diamino-6-hydroxy-4-(5-phosphoribosylamino)-pyrimidine + H2O + H(+) = 5-amino-6-(5-phospho-D-ribosylamino)uracil + NH4(+)</text>
        <dbReference type="Rhea" id="RHEA:21868"/>
        <dbReference type="ChEBI" id="CHEBI:15377"/>
        <dbReference type="ChEBI" id="CHEBI:15378"/>
        <dbReference type="ChEBI" id="CHEBI:28938"/>
        <dbReference type="ChEBI" id="CHEBI:58453"/>
        <dbReference type="ChEBI" id="CHEBI:58614"/>
        <dbReference type="EC" id="3.5.4.26"/>
    </reaction>
</comment>
<comment type="catalytic activity">
    <reaction>
        <text>5-amino-6-(5-phospho-D-ribitylamino)uracil + NADP(+) = 5-amino-6-(5-phospho-D-ribosylamino)uracil + NADPH + H(+)</text>
        <dbReference type="Rhea" id="RHEA:17845"/>
        <dbReference type="ChEBI" id="CHEBI:15378"/>
        <dbReference type="ChEBI" id="CHEBI:57783"/>
        <dbReference type="ChEBI" id="CHEBI:58349"/>
        <dbReference type="ChEBI" id="CHEBI:58421"/>
        <dbReference type="ChEBI" id="CHEBI:58453"/>
        <dbReference type="EC" id="1.1.1.193"/>
    </reaction>
</comment>
<comment type="cofactor">
    <cofactor evidence="1">
        <name>Zn(2+)</name>
        <dbReference type="ChEBI" id="CHEBI:29105"/>
    </cofactor>
    <text evidence="1">Binds 1 zinc ion.</text>
</comment>
<comment type="pathway">
    <text>Cofactor biosynthesis; riboflavin biosynthesis; 5-amino-6-(D-ribitylamino)uracil from GTP: step 2/4.</text>
</comment>
<comment type="pathway">
    <text>Cofactor biosynthesis; riboflavin biosynthesis; 5-amino-6-(D-ribitylamino)uracil from GTP: step 3/4.</text>
</comment>
<comment type="similarity">
    <text evidence="3">In the N-terminal section; belongs to the cytidine and deoxycytidylate deaminase family.</text>
</comment>
<comment type="similarity">
    <text evidence="3">In the C-terminal section; belongs to the HTP reductase family.</text>
</comment>